<dbReference type="EC" id="2.7.1.33"/>
<dbReference type="EMBL" id="CP000253">
    <property type="protein sequence ID" value="ABD31402.1"/>
    <property type="molecule type" value="Genomic_DNA"/>
</dbReference>
<dbReference type="RefSeq" id="WP_000862727.1">
    <property type="nucleotide sequence ID" value="NZ_LS483365.1"/>
</dbReference>
<dbReference type="RefSeq" id="YP_500848.1">
    <property type="nucleotide sequence ID" value="NC_007795.1"/>
</dbReference>
<dbReference type="PDB" id="5ELZ">
    <property type="method" value="X-ray"/>
    <property type="resolution" value="1.80 A"/>
    <property type="chains" value="A=1-267"/>
</dbReference>
<dbReference type="PDB" id="5JIC">
    <property type="method" value="X-ray"/>
    <property type="resolution" value="1.40 A"/>
    <property type="chains" value="A=1-267"/>
</dbReference>
<dbReference type="PDB" id="6AVP">
    <property type="method" value="X-ray"/>
    <property type="resolution" value="2.30 A"/>
    <property type="chains" value="A/B/C/D=1-265"/>
</dbReference>
<dbReference type="PDB" id="6AWG">
    <property type="method" value="X-ray"/>
    <property type="resolution" value="2.40 A"/>
    <property type="chains" value="A/B/C/D=1-266"/>
</dbReference>
<dbReference type="PDB" id="6AWH">
    <property type="method" value="X-ray"/>
    <property type="resolution" value="1.90 A"/>
    <property type="chains" value="A/B/C/D=1-266"/>
</dbReference>
<dbReference type="PDB" id="6AWI">
    <property type="method" value="X-ray"/>
    <property type="resolution" value="1.80 A"/>
    <property type="chains" value="A/B/C/D=1-266"/>
</dbReference>
<dbReference type="PDB" id="6AWJ">
    <property type="method" value="X-ray"/>
    <property type="resolution" value="2.50 A"/>
    <property type="chains" value="A/B/C/D=1-266"/>
</dbReference>
<dbReference type="PDB" id="6EBV">
    <property type="method" value="X-ray"/>
    <property type="resolution" value="3.00 A"/>
    <property type="chains" value="A/B/C/D=1-267"/>
</dbReference>
<dbReference type="PDBsum" id="5ELZ"/>
<dbReference type="PDBsum" id="5JIC"/>
<dbReference type="PDBsum" id="6AVP"/>
<dbReference type="PDBsum" id="6AWG"/>
<dbReference type="PDBsum" id="6AWH"/>
<dbReference type="PDBsum" id="6AWI"/>
<dbReference type="PDBsum" id="6AWJ"/>
<dbReference type="PDBsum" id="6EBV"/>
<dbReference type="SMR" id="Q2FWC7"/>
<dbReference type="STRING" id="93061.SAOUHSC_02371"/>
<dbReference type="PaxDb" id="1280-SAXN108_2375"/>
<dbReference type="GeneID" id="3919414"/>
<dbReference type="KEGG" id="sao:SAOUHSC_02371"/>
<dbReference type="PATRIC" id="fig|93061.5.peg.2148"/>
<dbReference type="eggNOG" id="COG5146">
    <property type="taxonomic scope" value="Bacteria"/>
</dbReference>
<dbReference type="HOGENOM" id="CLU_087521_1_0_9"/>
<dbReference type="OrthoDB" id="358216at2"/>
<dbReference type="SABIO-RK" id="Q2FWC7"/>
<dbReference type="UniPathway" id="UPA00241">
    <property type="reaction ID" value="UER00352"/>
</dbReference>
<dbReference type="PRO" id="PR:Q2FWC7"/>
<dbReference type="Proteomes" id="UP000008816">
    <property type="component" value="Chromosome"/>
</dbReference>
<dbReference type="GO" id="GO:0005829">
    <property type="term" value="C:cytosol"/>
    <property type="evidence" value="ECO:0000318"/>
    <property type="project" value="GO_Central"/>
</dbReference>
<dbReference type="GO" id="GO:0005524">
    <property type="term" value="F:ATP binding"/>
    <property type="evidence" value="ECO:0007669"/>
    <property type="project" value="UniProtKB-UniRule"/>
</dbReference>
<dbReference type="GO" id="GO:0004594">
    <property type="term" value="F:pantothenate kinase activity"/>
    <property type="evidence" value="ECO:0000318"/>
    <property type="project" value="GO_Central"/>
</dbReference>
<dbReference type="GO" id="GO:0015937">
    <property type="term" value="P:coenzyme A biosynthetic process"/>
    <property type="evidence" value="ECO:0000318"/>
    <property type="project" value="GO_Central"/>
</dbReference>
<dbReference type="CDD" id="cd24016">
    <property type="entry name" value="ASKHA_NBD_PanK-II"/>
    <property type="match status" value="1"/>
</dbReference>
<dbReference type="Gene3D" id="3.30.420.40">
    <property type="match status" value="1"/>
</dbReference>
<dbReference type="HAMAP" id="MF_01273">
    <property type="entry name" value="Pantothen_kinase_2"/>
    <property type="match status" value="1"/>
</dbReference>
<dbReference type="InterPro" id="IPR043129">
    <property type="entry name" value="ATPase_NBD"/>
</dbReference>
<dbReference type="InterPro" id="IPR004567">
    <property type="entry name" value="Type_II_PanK"/>
</dbReference>
<dbReference type="InterPro" id="IPR011602">
    <property type="entry name" value="Type_II_PanK_bac"/>
</dbReference>
<dbReference type="NCBIfam" id="TIGR00555">
    <property type="entry name" value="panK_eukar"/>
    <property type="match status" value="1"/>
</dbReference>
<dbReference type="NCBIfam" id="NF009842">
    <property type="entry name" value="PRK13317.1"/>
    <property type="match status" value="1"/>
</dbReference>
<dbReference type="PANTHER" id="PTHR12280:SF20">
    <property type="entry name" value="4'-PHOSPHOPANTETHEINE PHOSPHATASE"/>
    <property type="match status" value="1"/>
</dbReference>
<dbReference type="PANTHER" id="PTHR12280">
    <property type="entry name" value="PANTOTHENATE KINASE"/>
    <property type="match status" value="1"/>
</dbReference>
<dbReference type="Pfam" id="PF03630">
    <property type="entry name" value="Fumble"/>
    <property type="match status" value="1"/>
</dbReference>
<dbReference type="PIRSF" id="PIRSF036940">
    <property type="entry name" value="PanK_bac_aCoA"/>
    <property type="match status" value="1"/>
</dbReference>
<dbReference type="SUPFAM" id="SSF53067">
    <property type="entry name" value="Actin-like ATPase domain"/>
    <property type="match status" value="1"/>
</dbReference>
<name>COAW_STAA8</name>
<sequence length="267" mass="29097">MKVGIDAGGTLIKIVQEQDNQRTFKTELTKNIDQVVEWLNQQQIEKLCLTGGNAGVIAENINIPAQIFVEFDAASQGLGILLKEQGHDLADYIFANVGTGTSLHYFDGQSQRRVGGIGTGGGMIQGLGYLLSQITDYKQLTDMAQHGDRNTIDLKVRHIYKDTEPPIPGDLTAANFGHVLHHLDADFTPSNKLAAVIGVVGEVVTTMAITVAREFKTENIVYIGSSFHNNALLRKVVEDYTVLRGCKPYYVENGAFSGAIGALYLEK</sequence>
<keyword id="KW-0002">3D-structure</keyword>
<keyword id="KW-0067">ATP-binding</keyword>
<keyword id="KW-0173">Coenzyme A biosynthesis</keyword>
<keyword id="KW-0963">Cytoplasm</keyword>
<keyword id="KW-0903">Direct protein sequencing</keyword>
<keyword id="KW-0418">Kinase</keyword>
<keyword id="KW-0547">Nucleotide-binding</keyword>
<keyword id="KW-1185">Reference proteome</keyword>
<keyword id="KW-0808">Transferase</keyword>
<evidence type="ECO:0000250" key="1"/>
<evidence type="ECO:0000269" key="2">
    <source>
    </source>
</evidence>
<evidence type="ECO:0000269" key="3">
    <source>
    </source>
</evidence>
<evidence type="ECO:0000305" key="4"/>
<evidence type="ECO:0007829" key="5">
    <source>
        <dbReference type="PDB" id="5JIC"/>
    </source>
</evidence>
<evidence type="ECO:0007829" key="6">
    <source>
        <dbReference type="PDB" id="6AWH"/>
    </source>
</evidence>
<evidence type="ECO:0007829" key="7">
    <source>
        <dbReference type="PDB" id="6AWI"/>
    </source>
</evidence>
<evidence type="ECO:0007829" key="8">
    <source>
        <dbReference type="PDB" id="6EBV"/>
    </source>
</evidence>
<proteinExistence type="evidence at protein level"/>
<protein>
    <recommendedName>
        <fullName>Type II pantothenate kinase</fullName>
        <ecNumber>2.7.1.33</ecNumber>
    </recommendedName>
    <alternativeName>
        <fullName>PanK-II</fullName>
    </alternativeName>
    <alternativeName>
        <fullName>Pantothenic acid kinase</fullName>
    </alternativeName>
</protein>
<gene>
    <name type="primary">coaW</name>
    <name type="synonym">coaA</name>
    <name type="ordered locus">SAOUHSC_02371</name>
</gene>
<reference key="1">
    <citation type="book" date="2006" name="Gram positive pathogens, 2nd edition">
        <title>The Staphylococcus aureus NCTC 8325 genome.</title>
        <editorList>
            <person name="Fischetti V."/>
            <person name="Novick R."/>
            <person name="Ferretti J."/>
            <person name="Portnoy D."/>
            <person name="Rood J."/>
        </editorList>
        <authorList>
            <person name="Gillaspy A.F."/>
            <person name="Worrell V."/>
            <person name="Orvis J."/>
            <person name="Roe B.A."/>
            <person name="Dyer D.W."/>
            <person name="Iandolo J.J."/>
        </authorList>
    </citation>
    <scope>NUCLEOTIDE SEQUENCE [LARGE SCALE GENOMIC DNA]</scope>
    <source>
        <strain>NCTC 8325 / PS 47</strain>
    </source>
</reference>
<reference key="2">
    <citation type="journal article" date="2003" name="Antimicrob. Agents Chemother.">
        <title>Inhibitors of pantothenate kinase: novel antibiotics for staphylococcal infections.</title>
        <authorList>
            <person name="Choudhry A.E."/>
            <person name="Mandichak T.L."/>
            <person name="Broskey J.P."/>
            <person name="Egolf R.W."/>
            <person name="Kinsland C."/>
            <person name="Begley T.P."/>
            <person name="Seefeld M.A."/>
            <person name="Ku T.W."/>
            <person name="Brown J.R."/>
            <person name="Zalacain M."/>
            <person name="Ratnam K."/>
        </authorList>
    </citation>
    <scope>PROTEIN SEQUENCE OF N-TERMINUS</scope>
    <scope>FUNCTION</scope>
    <scope>BIOPHYSICOCHEMICAL PROPERTIES</scope>
    <scope>ACTIVITY REGULATION</scope>
</reference>
<reference key="3">
    <citation type="journal article" date="2005" name="J. Biol. Chem.">
        <title>A pantothenate kinase from Staphylococcus aureus refractory to feedback regulation by coenzyme A.</title>
        <authorList>
            <person name="Leonardi R."/>
            <person name="Chohnan S."/>
            <person name="Zhang Y.-M."/>
            <person name="Virga K.G."/>
            <person name="Lee R.E."/>
            <person name="Rock C.O."/>
            <person name="Jackowski S."/>
        </authorList>
    </citation>
    <scope>BIOPHYSICOCHEMICAL PROPERTIES</scope>
    <scope>SUBUNIT</scope>
    <scope>ACTIVITY REGULATION</scope>
</reference>
<organism>
    <name type="scientific">Staphylococcus aureus (strain NCTC 8325 / PS 47)</name>
    <dbReference type="NCBI Taxonomy" id="93061"/>
    <lineage>
        <taxon>Bacteria</taxon>
        <taxon>Bacillati</taxon>
        <taxon>Bacillota</taxon>
        <taxon>Bacilli</taxon>
        <taxon>Bacillales</taxon>
        <taxon>Staphylococcaceae</taxon>
        <taxon>Staphylococcus</taxon>
    </lineage>
</organism>
<accession>Q2FWC7</accession>
<feature type="chain" id="PRO_0000261350" description="Type II pantothenate kinase">
    <location>
        <begin position="1"/>
        <end position="267"/>
    </location>
</feature>
<feature type="active site" description="Proton acceptor" evidence="1">
    <location>
        <position position="70"/>
    </location>
</feature>
<feature type="binding site" evidence="1">
    <location>
        <begin position="6"/>
        <end position="13"/>
    </location>
    <ligand>
        <name>ATP</name>
        <dbReference type="ChEBI" id="CHEBI:30616"/>
    </ligand>
</feature>
<feature type="binding site" evidence="1">
    <location>
        <position position="99"/>
    </location>
    <ligand>
        <name>ATP</name>
        <dbReference type="ChEBI" id="CHEBI:30616"/>
    </ligand>
</feature>
<feature type="binding site" evidence="1">
    <location>
        <begin position="121"/>
        <end position="125"/>
    </location>
    <ligand>
        <name>ATP</name>
        <dbReference type="ChEBI" id="CHEBI:30616"/>
    </ligand>
</feature>
<feature type="binding site" evidence="1">
    <location>
        <position position="137"/>
    </location>
    <ligand>
        <name>ATP</name>
        <dbReference type="ChEBI" id="CHEBI:30616"/>
    </ligand>
</feature>
<feature type="binding site" evidence="1">
    <location>
        <position position="225"/>
    </location>
    <ligand>
        <name>ATP</name>
        <dbReference type="ChEBI" id="CHEBI:30616"/>
    </ligand>
</feature>
<feature type="strand" evidence="5">
    <location>
        <begin position="3"/>
        <end position="7"/>
    </location>
</feature>
<feature type="strand" evidence="5">
    <location>
        <begin position="9"/>
        <end position="16"/>
    </location>
</feature>
<feature type="strand" evidence="5">
    <location>
        <begin position="23"/>
        <end position="28"/>
    </location>
</feature>
<feature type="helix" evidence="5">
    <location>
        <begin position="29"/>
        <end position="31"/>
    </location>
</feature>
<feature type="helix" evidence="5">
    <location>
        <begin position="32"/>
        <end position="40"/>
    </location>
</feature>
<feature type="strand" evidence="5">
    <location>
        <begin position="47"/>
        <end position="51"/>
    </location>
</feature>
<feature type="helix" evidence="5">
    <location>
        <begin position="54"/>
        <end position="59"/>
    </location>
</feature>
<feature type="strand" evidence="7">
    <location>
        <begin position="61"/>
        <end position="63"/>
    </location>
</feature>
<feature type="strand" evidence="5">
    <location>
        <begin position="65"/>
        <end position="67"/>
    </location>
</feature>
<feature type="helix" evidence="5">
    <location>
        <begin position="70"/>
        <end position="84"/>
    </location>
</feature>
<feature type="strand" evidence="5">
    <location>
        <begin position="92"/>
        <end position="106"/>
    </location>
</feature>
<feature type="strand" evidence="5">
    <location>
        <begin position="111"/>
        <end position="118"/>
    </location>
</feature>
<feature type="helix" evidence="5">
    <location>
        <begin position="121"/>
        <end position="132"/>
    </location>
</feature>
<feature type="helix" evidence="5">
    <location>
        <begin position="137"/>
        <end position="144"/>
    </location>
</feature>
<feature type="turn" evidence="5">
    <location>
        <begin position="150"/>
        <end position="152"/>
    </location>
</feature>
<feature type="strand" evidence="8">
    <location>
        <begin position="153"/>
        <end position="155"/>
    </location>
</feature>
<feature type="helix" evidence="5">
    <location>
        <begin position="156"/>
        <end position="160"/>
    </location>
</feature>
<feature type="strand" evidence="5">
    <location>
        <begin position="171"/>
        <end position="174"/>
    </location>
</feature>
<feature type="turn" evidence="5">
    <location>
        <begin position="175"/>
        <end position="178"/>
    </location>
</feature>
<feature type="helix" evidence="5">
    <location>
        <begin position="179"/>
        <end position="181"/>
    </location>
</feature>
<feature type="strand" evidence="6">
    <location>
        <begin position="183"/>
        <end position="185"/>
    </location>
</feature>
<feature type="helix" evidence="5">
    <location>
        <begin position="189"/>
        <end position="215"/>
    </location>
</feature>
<feature type="strand" evidence="5">
    <location>
        <begin position="219"/>
        <end position="224"/>
    </location>
</feature>
<feature type="helix" evidence="5">
    <location>
        <begin position="225"/>
        <end position="227"/>
    </location>
</feature>
<feature type="helix" evidence="5">
    <location>
        <begin position="231"/>
        <end position="243"/>
    </location>
</feature>
<feature type="strand" evidence="5">
    <location>
        <begin position="247"/>
        <end position="250"/>
    </location>
</feature>
<feature type="helix" evidence="5">
    <location>
        <begin position="254"/>
        <end position="256"/>
    </location>
</feature>
<feature type="helix" evidence="5">
    <location>
        <begin position="257"/>
        <end position="267"/>
    </location>
</feature>
<comment type="function">
    <text evidence="2">Catalyzes the phosphorylation of pantothenate (Pan), the first step in CoA biosynthesis.</text>
</comment>
<comment type="catalytic activity">
    <reaction>
        <text>(R)-pantothenate + ATP = (R)-4'-phosphopantothenate + ADP + H(+)</text>
        <dbReference type="Rhea" id="RHEA:16373"/>
        <dbReference type="ChEBI" id="CHEBI:10986"/>
        <dbReference type="ChEBI" id="CHEBI:15378"/>
        <dbReference type="ChEBI" id="CHEBI:29032"/>
        <dbReference type="ChEBI" id="CHEBI:30616"/>
        <dbReference type="ChEBI" id="CHEBI:456216"/>
        <dbReference type="EC" id="2.7.1.33"/>
    </reaction>
</comment>
<comment type="activity regulation">
    <text evidence="2 3">Not regulated by feedback inhibition by CoA and its thioesters as described for many other pantothenate kinases. Competitively inhibited by N-pentylpantothenamide (N5-Pan) and N-heptylpantothenamide (N7-Pan), although these compounds can also act as substrates, being converted to inactive CoA analogs which inhibit a number of cellular targets, especially fatty acid biosynthesis.</text>
</comment>
<comment type="biophysicochemical properties">
    <kinetics>
        <KM evidence="2 3">27 uM for pantothenate</KM>
        <KM evidence="2 3">93 uM for ATP</KM>
        <KM evidence="2 3">3 uM for N-pentylpantothenamide</KM>
        <KM evidence="2 3">8 uM for N-heptylpantothenamide</KM>
    </kinetics>
</comment>
<comment type="pathway">
    <text>Cofactor biosynthesis; coenzyme A biosynthesis; CoA from (R)-pantothenate: step 1/5.</text>
</comment>
<comment type="subunit">
    <text evidence="3">Homodimer.</text>
</comment>
<comment type="subcellular location">
    <subcellularLocation>
        <location evidence="4">Cytoplasm</location>
    </subcellularLocation>
</comment>
<comment type="similarity">
    <text evidence="4">Belongs to the type II pantothenate kinase family.</text>
</comment>